<feature type="chain" id="PRO_1000126560" description="Large ribosomal subunit protein bL31">
    <location>
        <begin position="1"/>
        <end position="66"/>
    </location>
</feature>
<feature type="binding site" evidence="1">
    <location>
        <position position="16"/>
    </location>
    <ligand>
        <name>Zn(2+)</name>
        <dbReference type="ChEBI" id="CHEBI:29105"/>
    </ligand>
</feature>
<feature type="binding site" evidence="1">
    <location>
        <position position="18"/>
    </location>
    <ligand>
        <name>Zn(2+)</name>
        <dbReference type="ChEBI" id="CHEBI:29105"/>
    </ligand>
</feature>
<feature type="binding site" evidence="1">
    <location>
        <position position="36"/>
    </location>
    <ligand>
        <name>Zn(2+)</name>
        <dbReference type="ChEBI" id="CHEBI:29105"/>
    </ligand>
</feature>
<feature type="binding site" evidence="1">
    <location>
        <position position="39"/>
    </location>
    <ligand>
        <name>Zn(2+)</name>
        <dbReference type="ChEBI" id="CHEBI:29105"/>
    </ligand>
</feature>
<name>RL31_ANOFW</name>
<keyword id="KW-0479">Metal-binding</keyword>
<keyword id="KW-0687">Ribonucleoprotein</keyword>
<keyword id="KW-0689">Ribosomal protein</keyword>
<keyword id="KW-0694">RNA-binding</keyword>
<keyword id="KW-0699">rRNA-binding</keyword>
<keyword id="KW-0862">Zinc</keyword>
<organism>
    <name type="scientific">Anoxybacillus flavithermus (strain DSM 21510 / WK1)</name>
    <dbReference type="NCBI Taxonomy" id="491915"/>
    <lineage>
        <taxon>Bacteria</taxon>
        <taxon>Bacillati</taxon>
        <taxon>Bacillota</taxon>
        <taxon>Bacilli</taxon>
        <taxon>Bacillales</taxon>
        <taxon>Anoxybacillaceae</taxon>
        <taxon>Anoxybacillus</taxon>
    </lineage>
</organism>
<proteinExistence type="inferred from homology"/>
<comment type="function">
    <text evidence="1">Binds the 23S rRNA.</text>
</comment>
<comment type="cofactor">
    <cofactor evidence="1">
        <name>Zn(2+)</name>
        <dbReference type="ChEBI" id="CHEBI:29105"/>
    </cofactor>
    <text evidence="1">Binds 1 zinc ion per subunit.</text>
</comment>
<comment type="subunit">
    <text evidence="1">Part of the 50S ribosomal subunit.</text>
</comment>
<comment type="similarity">
    <text evidence="1">Belongs to the bacterial ribosomal protein bL31 family. Type A subfamily.</text>
</comment>
<evidence type="ECO:0000255" key="1">
    <source>
        <dbReference type="HAMAP-Rule" id="MF_00501"/>
    </source>
</evidence>
<evidence type="ECO:0000305" key="2"/>
<protein>
    <recommendedName>
        <fullName evidence="1">Large ribosomal subunit protein bL31</fullName>
    </recommendedName>
    <alternativeName>
        <fullName evidence="2">50S ribosomal protein L31</fullName>
    </alternativeName>
</protein>
<reference key="1">
    <citation type="journal article" date="2008" name="Genome Biol.">
        <title>Encapsulated in silica: genome, proteome and physiology of the thermophilic bacterium Anoxybacillus flavithermus WK1.</title>
        <authorList>
            <person name="Saw J.H."/>
            <person name="Mountain B.W."/>
            <person name="Feng L."/>
            <person name="Omelchenko M.V."/>
            <person name="Hou S."/>
            <person name="Saito J.A."/>
            <person name="Stott M.B."/>
            <person name="Li D."/>
            <person name="Zhao G."/>
            <person name="Wu J."/>
            <person name="Galperin M.Y."/>
            <person name="Koonin E.V."/>
            <person name="Makarova K.S."/>
            <person name="Wolf Y.I."/>
            <person name="Rigden D.J."/>
            <person name="Dunfield P.F."/>
            <person name="Wang L."/>
            <person name="Alam M."/>
        </authorList>
    </citation>
    <scope>NUCLEOTIDE SEQUENCE [LARGE SCALE GENOMIC DNA]</scope>
    <source>
        <strain>DSM 21510 / WK1</strain>
    </source>
</reference>
<accession>B7GMH5</accession>
<gene>
    <name evidence="1" type="primary">rpmE</name>
    <name type="ordered locus">Aflv_2724</name>
</gene>
<sequence length="66" mass="7360">MKAGIHPNYKKVMVKCACGNEFESGSVKDEVRVEICSACHPFYTGRQKFASAAGRVDKFNKKYGLK</sequence>
<dbReference type="EMBL" id="CP000922">
    <property type="protein sequence ID" value="ACJ35077.1"/>
    <property type="molecule type" value="Genomic_DNA"/>
</dbReference>
<dbReference type="RefSeq" id="WP_003397039.1">
    <property type="nucleotide sequence ID" value="NC_011567.1"/>
</dbReference>
<dbReference type="SMR" id="B7GMH5"/>
<dbReference type="STRING" id="491915.Aflv_2724"/>
<dbReference type="GeneID" id="7038997"/>
<dbReference type="KEGG" id="afl:Aflv_2724"/>
<dbReference type="eggNOG" id="COG0254">
    <property type="taxonomic scope" value="Bacteria"/>
</dbReference>
<dbReference type="HOGENOM" id="CLU_114306_4_3_9"/>
<dbReference type="Proteomes" id="UP000000742">
    <property type="component" value="Chromosome"/>
</dbReference>
<dbReference type="GO" id="GO:1990904">
    <property type="term" value="C:ribonucleoprotein complex"/>
    <property type="evidence" value="ECO:0007669"/>
    <property type="project" value="UniProtKB-KW"/>
</dbReference>
<dbReference type="GO" id="GO:0005840">
    <property type="term" value="C:ribosome"/>
    <property type="evidence" value="ECO:0007669"/>
    <property type="project" value="UniProtKB-KW"/>
</dbReference>
<dbReference type="GO" id="GO:0046872">
    <property type="term" value="F:metal ion binding"/>
    <property type="evidence" value="ECO:0007669"/>
    <property type="project" value="UniProtKB-KW"/>
</dbReference>
<dbReference type="GO" id="GO:0019843">
    <property type="term" value="F:rRNA binding"/>
    <property type="evidence" value="ECO:0007669"/>
    <property type="project" value="UniProtKB-KW"/>
</dbReference>
<dbReference type="GO" id="GO:0003735">
    <property type="term" value="F:structural constituent of ribosome"/>
    <property type="evidence" value="ECO:0007669"/>
    <property type="project" value="InterPro"/>
</dbReference>
<dbReference type="GO" id="GO:0006412">
    <property type="term" value="P:translation"/>
    <property type="evidence" value="ECO:0007669"/>
    <property type="project" value="UniProtKB-UniRule"/>
</dbReference>
<dbReference type="Gene3D" id="4.10.830.30">
    <property type="entry name" value="Ribosomal protein L31"/>
    <property type="match status" value="1"/>
</dbReference>
<dbReference type="HAMAP" id="MF_00501">
    <property type="entry name" value="Ribosomal_bL31_1"/>
    <property type="match status" value="1"/>
</dbReference>
<dbReference type="InterPro" id="IPR034704">
    <property type="entry name" value="Ribosomal_bL28/bL31-like_sf"/>
</dbReference>
<dbReference type="InterPro" id="IPR002150">
    <property type="entry name" value="Ribosomal_bL31"/>
</dbReference>
<dbReference type="InterPro" id="IPR027491">
    <property type="entry name" value="Ribosomal_bL31_A"/>
</dbReference>
<dbReference type="InterPro" id="IPR042105">
    <property type="entry name" value="Ribosomal_bL31_sf"/>
</dbReference>
<dbReference type="NCBIfam" id="TIGR00105">
    <property type="entry name" value="L31"/>
    <property type="match status" value="1"/>
</dbReference>
<dbReference type="NCBIfam" id="NF000612">
    <property type="entry name" value="PRK00019.1"/>
    <property type="match status" value="1"/>
</dbReference>
<dbReference type="PANTHER" id="PTHR33280">
    <property type="entry name" value="50S RIBOSOMAL PROTEIN L31, CHLOROPLASTIC"/>
    <property type="match status" value="1"/>
</dbReference>
<dbReference type="PANTHER" id="PTHR33280:SF1">
    <property type="entry name" value="LARGE RIBOSOMAL SUBUNIT PROTEIN BL31C"/>
    <property type="match status" value="1"/>
</dbReference>
<dbReference type="Pfam" id="PF01197">
    <property type="entry name" value="Ribosomal_L31"/>
    <property type="match status" value="1"/>
</dbReference>
<dbReference type="PRINTS" id="PR01249">
    <property type="entry name" value="RIBOSOMALL31"/>
</dbReference>
<dbReference type="SUPFAM" id="SSF143800">
    <property type="entry name" value="L28p-like"/>
    <property type="match status" value="1"/>
</dbReference>
<dbReference type="PROSITE" id="PS01143">
    <property type="entry name" value="RIBOSOMAL_L31"/>
    <property type="match status" value="1"/>
</dbReference>